<dbReference type="EMBL" id="FM177140">
    <property type="protein sequence ID" value="CAQ66474.1"/>
    <property type="molecule type" value="Genomic_DNA"/>
</dbReference>
<dbReference type="KEGG" id="lcb:LCABL_13930"/>
<dbReference type="HOGENOM" id="CLU_144811_2_2_9"/>
<dbReference type="GO" id="GO:0005886">
    <property type="term" value="C:plasma membrane"/>
    <property type="evidence" value="ECO:0007669"/>
    <property type="project" value="UniProtKB-SubCell"/>
</dbReference>
<dbReference type="HAMAP" id="MF_00386">
    <property type="entry name" value="UPF0161_YidD"/>
    <property type="match status" value="1"/>
</dbReference>
<dbReference type="InterPro" id="IPR002696">
    <property type="entry name" value="Membr_insert_effic_factor_YidD"/>
</dbReference>
<dbReference type="NCBIfam" id="TIGR00278">
    <property type="entry name" value="membrane protein insertion efficiency factor YidD"/>
    <property type="match status" value="1"/>
</dbReference>
<dbReference type="PANTHER" id="PTHR33383">
    <property type="entry name" value="MEMBRANE PROTEIN INSERTION EFFICIENCY FACTOR-RELATED"/>
    <property type="match status" value="1"/>
</dbReference>
<dbReference type="PANTHER" id="PTHR33383:SF1">
    <property type="entry name" value="MEMBRANE PROTEIN INSERTION EFFICIENCY FACTOR-RELATED"/>
    <property type="match status" value="1"/>
</dbReference>
<dbReference type="Pfam" id="PF01809">
    <property type="entry name" value="YidD"/>
    <property type="match status" value="1"/>
</dbReference>
<dbReference type="SMART" id="SM01234">
    <property type="entry name" value="Haemolytic"/>
    <property type="match status" value="1"/>
</dbReference>
<feature type="chain" id="PRO_1000197755" description="Putative membrane protein insertion efficiency factor">
    <location>
        <begin position="1"/>
        <end position="101"/>
    </location>
</feature>
<evidence type="ECO:0000255" key="1">
    <source>
        <dbReference type="HAMAP-Rule" id="MF_00386"/>
    </source>
</evidence>
<gene>
    <name type="ordered locus">LCABL_13930</name>
</gene>
<accession>B3WDM3</accession>
<name>YIDD_LACCB</name>
<keyword id="KW-1003">Cell membrane</keyword>
<keyword id="KW-0472">Membrane</keyword>
<comment type="function">
    <text evidence="1">Could be involved in insertion of integral membrane proteins into the membrane.</text>
</comment>
<comment type="subcellular location">
    <subcellularLocation>
        <location evidence="1">Cell membrane</location>
        <topology evidence="1">Peripheral membrane protein</topology>
        <orientation evidence="1">Cytoplasmic side</orientation>
    </subcellularLocation>
</comment>
<comment type="similarity">
    <text evidence="1">Belongs to the UPF0161 family.</text>
</comment>
<organism>
    <name type="scientific">Lacticaseibacillus casei (strain BL23)</name>
    <name type="common">Lactobacillus casei</name>
    <dbReference type="NCBI Taxonomy" id="543734"/>
    <lineage>
        <taxon>Bacteria</taxon>
        <taxon>Bacillati</taxon>
        <taxon>Bacillota</taxon>
        <taxon>Bacilli</taxon>
        <taxon>Lactobacillales</taxon>
        <taxon>Lactobacillaceae</taxon>
        <taxon>Lacticaseibacillus</taxon>
    </lineage>
</organism>
<protein>
    <recommendedName>
        <fullName evidence="1">Putative membrane protein insertion efficiency factor</fullName>
    </recommendedName>
</protein>
<proteinExistence type="inferred from homology"/>
<sequence>MKQVLTWLVRGYQRFISPLLPPSCRYYPTCSTYMIQALQKHGAIKGSLMGIARILRCNPFVKGGLDPVPAFFTLRRNPHPENDLDLSDIQNLNHKLGGRHG</sequence>
<reference key="1">
    <citation type="submission" date="2008-06" db="EMBL/GenBank/DDBJ databases">
        <title>Lactobacillus casei BL23 complete genome sequence.</title>
        <authorList>
            <person name="Maze A."/>
            <person name="Boel G."/>
            <person name="Bourand A."/>
            <person name="Loux V."/>
            <person name="Gibrat J.F."/>
            <person name="Zuniga M."/>
            <person name="Hartke A."/>
            <person name="Deutscher J."/>
        </authorList>
    </citation>
    <scope>NUCLEOTIDE SEQUENCE [LARGE SCALE GENOMIC DNA]</scope>
    <source>
        <strain>BL23</strain>
    </source>
</reference>